<name>ISPE_CHESB</name>
<protein>
    <recommendedName>
        <fullName evidence="1">4-diphosphocytidyl-2-C-methyl-D-erythritol kinase</fullName>
        <shortName evidence="1">CMK</shortName>
        <ecNumber evidence="1">2.7.1.148</ecNumber>
    </recommendedName>
    <alternativeName>
        <fullName evidence="1">4-(cytidine-5'-diphospho)-2-C-methyl-D-erythritol kinase</fullName>
    </alternativeName>
</protein>
<proteinExistence type="inferred from homology"/>
<dbReference type="EC" id="2.7.1.148" evidence="1"/>
<dbReference type="EMBL" id="CP000390">
    <property type="protein sequence ID" value="ABG62106.1"/>
    <property type="molecule type" value="Genomic_DNA"/>
</dbReference>
<dbReference type="SMR" id="Q11KG9"/>
<dbReference type="STRING" id="266779.Meso_0706"/>
<dbReference type="KEGG" id="mes:Meso_0706"/>
<dbReference type="eggNOG" id="COG1947">
    <property type="taxonomic scope" value="Bacteria"/>
</dbReference>
<dbReference type="HOGENOM" id="CLU_053057_1_0_5"/>
<dbReference type="OrthoDB" id="9809438at2"/>
<dbReference type="UniPathway" id="UPA00056">
    <property type="reaction ID" value="UER00094"/>
</dbReference>
<dbReference type="GO" id="GO:0050515">
    <property type="term" value="F:4-(cytidine 5'-diphospho)-2-C-methyl-D-erythritol kinase activity"/>
    <property type="evidence" value="ECO:0007669"/>
    <property type="project" value="UniProtKB-UniRule"/>
</dbReference>
<dbReference type="GO" id="GO:0005524">
    <property type="term" value="F:ATP binding"/>
    <property type="evidence" value="ECO:0007669"/>
    <property type="project" value="UniProtKB-UniRule"/>
</dbReference>
<dbReference type="GO" id="GO:0019288">
    <property type="term" value="P:isopentenyl diphosphate biosynthetic process, methylerythritol 4-phosphate pathway"/>
    <property type="evidence" value="ECO:0007669"/>
    <property type="project" value="UniProtKB-UniRule"/>
</dbReference>
<dbReference type="GO" id="GO:0016114">
    <property type="term" value="P:terpenoid biosynthetic process"/>
    <property type="evidence" value="ECO:0007669"/>
    <property type="project" value="InterPro"/>
</dbReference>
<dbReference type="Gene3D" id="3.30.230.10">
    <property type="match status" value="1"/>
</dbReference>
<dbReference type="Gene3D" id="3.30.70.890">
    <property type="entry name" value="GHMP kinase, C-terminal domain"/>
    <property type="match status" value="1"/>
</dbReference>
<dbReference type="HAMAP" id="MF_00061">
    <property type="entry name" value="IspE"/>
    <property type="match status" value="1"/>
</dbReference>
<dbReference type="InterPro" id="IPR013750">
    <property type="entry name" value="GHMP_kinase_C_dom"/>
</dbReference>
<dbReference type="InterPro" id="IPR036554">
    <property type="entry name" value="GHMP_kinase_C_sf"/>
</dbReference>
<dbReference type="InterPro" id="IPR006204">
    <property type="entry name" value="GHMP_kinase_N_dom"/>
</dbReference>
<dbReference type="InterPro" id="IPR004424">
    <property type="entry name" value="IspE"/>
</dbReference>
<dbReference type="InterPro" id="IPR020568">
    <property type="entry name" value="Ribosomal_Su5_D2-typ_SF"/>
</dbReference>
<dbReference type="InterPro" id="IPR014721">
    <property type="entry name" value="Ribsml_uS5_D2-typ_fold_subgr"/>
</dbReference>
<dbReference type="NCBIfam" id="TIGR00154">
    <property type="entry name" value="ispE"/>
    <property type="match status" value="1"/>
</dbReference>
<dbReference type="NCBIfam" id="NF011202">
    <property type="entry name" value="PRK14608.1"/>
    <property type="match status" value="1"/>
</dbReference>
<dbReference type="PANTHER" id="PTHR43527">
    <property type="entry name" value="4-DIPHOSPHOCYTIDYL-2-C-METHYL-D-ERYTHRITOL KINASE, CHLOROPLASTIC"/>
    <property type="match status" value="1"/>
</dbReference>
<dbReference type="PANTHER" id="PTHR43527:SF2">
    <property type="entry name" value="4-DIPHOSPHOCYTIDYL-2-C-METHYL-D-ERYTHRITOL KINASE, CHLOROPLASTIC"/>
    <property type="match status" value="1"/>
</dbReference>
<dbReference type="Pfam" id="PF08544">
    <property type="entry name" value="GHMP_kinases_C"/>
    <property type="match status" value="1"/>
</dbReference>
<dbReference type="Pfam" id="PF00288">
    <property type="entry name" value="GHMP_kinases_N"/>
    <property type="match status" value="1"/>
</dbReference>
<dbReference type="PIRSF" id="PIRSF010376">
    <property type="entry name" value="IspE"/>
    <property type="match status" value="1"/>
</dbReference>
<dbReference type="SUPFAM" id="SSF55060">
    <property type="entry name" value="GHMP Kinase, C-terminal domain"/>
    <property type="match status" value="1"/>
</dbReference>
<dbReference type="SUPFAM" id="SSF54211">
    <property type="entry name" value="Ribosomal protein S5 domain 2-like"/>
    <property type="match status" value="1"/>
</dbReference>
<accession>Q11KG9</accession>
<reference key="1">
    <citation type="submission" date="2006-06" db="EMBL/GenBank/DDBJ databases">
        <title>Complete sequence of chromosome of Mesorhizobium sp. BNC1.</title>
        <authorList>
            <consortium name="US DOE Joint Genome Institute"/>
            <person name="Copeland A."/>
            <person name="Lucas S."/>
            <person name="Lapidus A."/>
            <person name="Barry K."/>
            <person name="Detter J.C."/>
            <person name="Glavina del Rio T."/>
            <person name="Hammon N."/>
            <person name="Israni S."/>
            <person name="Dalin E."/>
            <person name="Tice H."/>
            <person name="Pitluck S."/>
            <person name="Chertkov O."/>
            <person name="Brettin T."/>
            <person name="Bruce D."/>
            <person name="Han C."/>
            <person name="Tapia R."/>
            <person name="Gilna P."/>
            <person name="Schmutz J."/>
            <person name="Larimer F."/>
            <person name="Land M."/>
            <person name="Hauser L."/>
            <person name="Kyrpides N."/>
            <person name="Mikhailova N."/>
            <person name="Richardson P."/>
        </authorList>
    </citation>
    <scope>NUCLEOTIDE SEQUENCE [LARGE SCALE GENOMIC DNA]</scope>
    <source>
        <strain>BNC1</strain>
    </source>
</reference>
<feature type="chain" id="PRO_0000335726" description="4-diphosphocytidyl-2-C-methyl-D-erythritol kinase">
    <location>
        <begin position="1"/>
        <end position="293"/>
    </location>
</feature>
<feature type="active site" evidence="1">
    <location>
        <position position="10"/>
    </location>
</feature>
<feature type="active site" evidence="1">
    <location>
        <position position="138"/>
    </location>
</feature>
<feature type="binding site" evidence="1">
    <location>
        <begin position="96"/>
        <end position="106"/>
    </location>
    <ligand>
        <name>ATP</name>
        <dbReference type="ChEBI" id="CHEBI:30616"/>
    </ligand>
</feature>
<keyword id="KW-0067">ATP-binding</keyword>
<keyword id="KW-0414">Isoprene biosynthesis</keyword>
<keyword id="KW-0418">Kinase</keyword>
<keyword id="KW-0547">Nucleotide-binding</keyword>
<keyword id="KW-0808">Transferase</keyword>
<comment type="function">
    <text evidence="1">Catalyzes the phosphorylation of the position 2 hydroxy group of 4-diphosphocytidyl-2C-methyl-D-erythritol.</text>
</comment>
<comment type="catalytic activity">
    <reaction evidence="1">
        <text>4-CDP-2-C-methyl-D-erythritol + ATP = 4-CDP-2-C-methyl-D-erythritol 2-phosphate + ADP + H(+)</text>
        <dbReference type="Rhea" id="RHEA:18437"/>
        <dbReference type="ChEBI" id="CHEBI:15378"/>
        <dbReference type="ChEBI" id="CHEBI:30616"/>
        <dbReference type="ChEBI" id="CHEBI:57823"/>
        <dbReference type="ChEBI" id="CHEBI:57919"/>
        <dbReference type="ChEBI" id="CHEBI:456216"/>
        <dbReference type="EC" id="2.7.1.148"/>
    </reaction>
</comment>
<comment type="pathway">
    <text evidence="1">Isoprenoid biosynthesis; isopentenyl diphosphate biosynthesis via DXP pathway; isopentenyl diphosphate from 1-deoxy-D-xylulose 5-phosphate: step 3/6.</text>
</comment>
<comment type="similarity">
    <text evidence="1">Belongs to the GHMP kinase family. IspE subfamily.</text>
</comment>
<organism>
    <name type="scientific">Chelativorans sp. (strain BNC1)</name>
    <dbReference type="NCBI Taxonomy" id="266779"/>
    <lineage>
        <taxon>Bacteria</taxon>
        <taxon>Pseudomonadati</taxon>
        <taxon>Pseudomonadota</taxon>
        <taxon>Alphaproteobacteria</taxon>
        <taxon>Hyphomicrobiales</taxon>
        <taxon>Phyllobacteriaceae</taxon>
        <taxon>Chelativorans</taxon>
    </lineage>
</organism>
<gene>
    <name evidence="1" type="primary">ispE</name>
    <name type="ordered locus">Meso_0706</name>
</gene>
<evidence type="ECO:0000255" key="1">
    <source>
        <dbReference type="HAMAP-Rule" id="MF_00061"/>
    </source>
</evidence>
<sequence>MKLECIAPAKINLALHVIGRRTDGYHLLESLVAFAAFGDRLSVEKAEADTFLLAGPFRDGLEGSGNFVLNARDLLREKFASRASSPVAITLEKNLPVASGIGGGSSDAATGLKLLTRYWEIETEPAELAQIGLGLGADVPMCLFGQPLIASGIGEKLEPVSTLPSLPILLVNPGLPLATPAVFSSLVERENAPLPPAPRNKSAAELVNWLRLTRNDLEPAALSIMPVIGIVLRLLQTEGALIARMSGSGATCFGIFETASKARQAGEMISRRHPGWFVRATQTRASMPELSHV</sequence>